<dbReference type="EMBL" id="AF132040">
    <property type="protein sequence ID" value="AAD30521.1"/>
    <property type="molecule type" value="mRNA"/>
</dbReference>
<dbReference type="EMBL" id="AF031532">
    <property type="protein sequence ID" value="AAB86632.1"/>
    <property type="molecule type" value="mRNA"/>
</dbReference>
<dbReference type="RefSeq" id="NP_001009871.1">
    <property type="nucleotide sequence ID" value="NM_001009871.1"/>
</dbReference>
<dbReference type="SMR" id="O18913"/>
<dbReference type="FunCoup" id="O18913">
    <property type="interactions" value="36"/>
</dbReference>
<dbReference type="STRING" id="9685.ENSFCAP00000010584"/>
<dbReference type="GlyCosmos" id="O18913">
    <property type="glycosylation" value="2 sites, No reported glycans"/>
</dbReference>
<dbReference type="PaxDb" id="9685-ENSFCAP00000010584"/>
<dbReference type="Ensembl" id="ENSFCAT00000011393.4">
    <property type="protein sequence ID" value="ENSFCAP00000010584.1"/>
    <property type="gene ID" value="ENSFCAG00000011390.4"/>
</dbReference>
<dbReference type="GeneID" id="493959"/>
<dbReference type="KEGG" id="fca:493959"/>
<dbReference type="CTD" id="5956"/>
<dbReference type="eggNOG" id="KOG3656">
    <property type="taxonomic scope" value="Eukaryota"/>
</dbReference>
<dbReference type="GeneTree" id="ENSGT01030000234549"/>
<dbReference type="HOGENOM" id="CLU_009579_3_0_1"/>
<dbReference type="InParanoid" id="O18913"/>
<dbReference type="OMA" id="RRICKER"/>
<dbReference type="OrthoDB" id="8545112at2759"/>
<dbReference type="TreeFam" id="TF324998"/>
<dbReference type="Proteomes" id="UP000011712">
    <property type="component" value="Chromosome X"/>
</dbReference>
<dbReference type="Bgee" id="ENSFCAG00000011390">
    <property type="expression patterns" value="Expressed in eyeball of camera-type eye"/>
</dbReference>
<dbReference type="GO" id="GO:0001750">
    <property type="term" value="C:photoreceptor outer segment"/>
    <property type="evidence" value="ECO:0000318"/>
    <property type="project" value="GO_Central"/>
</dbReference>
<dbReference type="GO" id="GO:0005886">
    <property type="term" value="C:plasma membrane"/>
    <property type="evidence" value="ECO:0000318"/>
    <property type="project" value="GO_Central"/>
</dbReference>
<dbReference type="GO" id="GO:0008020">
    <property type="term" value="F:G protein-coupled photoreceptor activity"/>
    <property type="evidence" value="ECO:0000318"/>
    <property type="project" value="GO_Central"/>
</dbReference>
<dbReference type="GO" id="GO:0071482">
    <property type="term" value="P:cellular response to light stimulus"/>
    <property type="evidence" value="ECO:0000318"/>
    <property type="project" value="GO_Central"/>
</dbReference>
<dbReference type="GO" id="GO:0007186">
    <property type="term" value="P:G protein-coupled receptor signaling pathway"/>
    <property type="evidence" value="ECO:0000318"/>
    <property type="project" value="GO_Central"/>
</dbReference>
<dbReference type="GO" id="GO:0007602">
    <property type="term" value="P:phototransduction"/>
    <property type="evidence" value="ECO:0000318"/>
    <property type="project" value="GO_Central"/>
</dbReference>
<dbReference type="GO" id="GO:0007601">
    <property type="term" value="P:visual perception"/>
    <property type="evidence" value="ECO:0007669"/>
    <property type="project" value="UniProtKB-KW"/>
</dbReference>
<dbReference type="FunFam" id="1.20.1070.10:FF:000090">
    <property type="entry name" value="Long-wave-sensitive opsin 1"/>
    <property type="match status" value="1"/>
</dbReference>
<dbReference type="Gene3D" id="1.20.1070.10">
    <property type="entry name" value="Rhodopsin 7-helix transmembrane proteins"/>
    <property type="match status" value="1"/>
</dbReference>
<dbReference type="InterPro" id="IPR050125">
    <property type="entry name" value="GPCR_opsins"/>
</dbReference>
<dbReference type="InterPro" id="IPR000276">
    <property type="entry name" value="GPCR_Rhodpsn"/>
</dbReference>
<dbReference type="InterPro" id="IPR017452">
    <property type="entry name" value="GPCR_Rhodpsn_7TM"/>
</dbReference>
<dbReference type="InterPro" id="IPR001760">
    <property type="entry name" value="Opsin"/>
</dbReference>
<dbReference type="InterPro" id="IPR000378">
    <property type="entry name" value="Opsin_red/grn"/>
</dbReference>
<dbReference type="InterPro" id="IPR027430">
    <property type="entry name" value="Retinal_BS"/>
</dbReference>
<dbReference type="PANTHER" id="PTHR24240">
    <property type="entry name" value="OPSIN"/>
    <property type="match status" value="1"/>
</dbReference>
<dbReference type="Pfam" id="PF00001">
    <property type="entry name" value="7tm_1"/>
    <property type="match status" value="1"/>
</dbReference>
<dbReference type="PRINTS" id="PR00237">
    <property type="entry name" value="GPCRRHODOPSN"/>
</dbReference>
<dbReference type="PRINTS" id="PR00238">
    <property type="entry name" value="OPSIN"/>
</dbReference>
<dbReference type="PRINTS" id="PR00575">
    <property type="entry name" value="OPSINREDGRN"/>
</dbReference>
<dbReference type="SMART" id="SM01381">
    <property type="entry name" value="7TM_GPCR_Srsx"/>
    <property type="match status" value="1"/>
</dbReference>
<dbReference type="SUPFAM" id="SSF81321">
    <property type="entry name" value="Family A G protein-coupled receptor-like"/>
    <property type="match status" value="1"/>
</dbReference>
<dbReference type="PROSITE" id="PS00237">
    <property type="entry name" value="G_PROTEIN_RECEP_F1_1"/>
    <property type="match status" value="1"/>
</dbReference>
<dbReference type="PROSITE" id="PS50262">
    <property type="entry name" value="G_PROTEIN_RECEP_F1_2"/>
    <property type="match status" value="1"/>
</dbReference>
<dbReference type="PROSITE" id="PS00238">
    <property type="entry name" value="OPSIN"/>
    <property type="match status" value="1"/>
</dbReference>
<evidence type="ECO:0000250" key="1"/>
<evidence type="ECO:0000250" key="2">
    <source>
        <dbReference type="UniProtKB" id="Q9BGI7"/>
    </source>
</evidence>
<evidence type="ECO:0000255" key="3"/>
<evidence type="ECO:0000255" key="4">
    <source>
        <dbReference type="PROSITE-ProRule" id="PRU00521"/>
    </source>
</evidence>
<evidence type="ECO:0000269" key="5">
    <source>
    </source>
</evidence>
<gene>
    <name type="primary">OPN1LW</name>
    <name type="synonym">RCP</name>
</gene>
<reference key="1">
    <citation type="journal article" date="1999" name="Genetics">
        <title>The molecular genetics of red and green color vision in mammals.</title>
        <authorList>
            <person name="Yokoyama S."/>
            <person name="Radlwimmer F.B."/>
        </authorList>
    </citation>
    <scope>NUCLEOTIDE SEQUENCE [MRNA]</scope>
    <scope>BIOPHYSICOCHEMICAL PROPERTIES</scope>
    <scope>TISSUE SPECIFICITY</scope>
</reference>
<reference key="2">
    <citation type="journal article" date="1998" name="Mol. Biol. Evol.">
        <title>The 'five-sites' rule and the evolution of red and green color vision in mammals.</title>
        <authorList>
            <person name="Yokoyama S."/>
            <person name="Radlwimmer F.B."/>
        </authorList>
    </citation>
    <scope>NUCLEOTIDE SEQUENCE [MRNA] OF 48-320</scope>
</reference>
<keyword id="KW-0157">Chromophore</keyword>
<keyword id="KW-1015">Disulfide bond</keyword>
<keyword id="KW-0297">G-protein coupled receptor</keyword>
<keyword id="KW-0325">Glycoprotein</keyword>
<keyword id="KW-0472">Membrane</keyword>
<keyword id="KW-0597">Phosphoprotein</keyword>
<keyword id="KW-0600">Photoreceptor protein</keyword>
<keyword id="KW-0675">Receptor</keyword>
<keyword id="KW-1185">Reference proteome</keyword>
<keyword id="KW-0681">Retinal protein</keyword>
<keyword id="KW-0716">Sensory transduction</keyword>
<keyword id="KW-0807">Transducer</keyword>
<keyword id="KW-0812">Transmembrane</keyword>
<keyword id="KW-1133">Transmembrane helix</keyword>
<keyword id="KW-0844">Vision</keyword>
<accession>O18913</accession>
<accession>Q9TST7</accession>
<protein>
    <recommendedName>
        <fullName>Long-wave-sensitive opsin 1</fullName>
    </recommendedName>
    <alternativeName>
        <fullName>Red cone photoreceptor pigment</fullName>
    </alternativeName>
    <alternativeName>
        <fullName>Red-sensitive opsin</fullName>
    </alternativeName>
</protein>
<name>OPSR_FELCA</name>
<proteinExistence type="evidence at protein level"/>
<feature type="chain" id="PRO_0000197800" description="Long-wave-sensitive opsin 1">
    <location>
        <begin position="1"/>
        <end position="364"/>
    </location>
</feature>
<feature type="topological domain" description="Extracellular">
    <location>
        <begin position="1"/>
        <end position="52"/>
    </location>
</feature>
<feature type="transmembrane region" description="Helical; Name=1" evidence="3">
    <location>
        <begin position="53"/>
        <end position="77"/>
    </location>
</feature>
<feature type="topological domain" description="Cytoplasmic">
    <location>
        <begin position="78"/>
        <end position="89"/>
    </location>
</feature>
<feature type="transmembrane region" description="Helical; Name=2" evidence="3">
    <location>
        <begin position="90"/>
        <end position="115"/>
    </location>
</feature>
<feature type="topological domain" description="Extracellular">
    <location>
        <begin position="116"/>
        <end position="129"/>
    </location>
</feature>
<feature type="transmembrane region" description="Helical; Name=3" evidence="3">
    <location>
        <begin position="130"/>
        <end position="149"/>
    </location>
</feature>
<feature type="topological domain" description="Cytoplasmic">
    <location>
        <begin position="150"/>
        <end position="168"/>
    </location>
</feature>
<feature type="transmembrane region" description="Helical; Name=4" evidence="3">
    <location>
        <begin position="169"/>
        <end position="192"/>
    </location>
</feature>
<feature type="topological domain" description="Extracellular">
    <location>
        <begin position="193"/>
        <end position="218"/>
    </location>
</feature>
<feature type="transmembrane region" description="Helical; Name=5" evidence="3">
    <location>
        <begin position="219"/>
        <end position="246"/>
    </location>
</feature>
<feature type="topological domain" description="Cytoplasmic">
    <location>
        <begin position="247"/>
        <end position="268"/>
    </location>
</feature>
<feature type="transmembrane region" description="Helical; Name=6" evidence="3">
    <location>
        <begin position="269"/>
        <end position="292"/>
    </location>
</feature>
<feature type="topological domain" description="Extracellular">
    <location>
        <begin position="293"/>
        <end position="300"/>
    </location>
</feature>
<feature type="transmembrane region" description="Helical; Name=7" evidence="3">
    <location>
        <begin position="301"/>
        <end position="325"/>
    </location>
</feature>
<feature type="topological domain" description="Cytoplasmic">
    <location>
        <begin position="326"/>
        <end position="364"/>
    </location>
</feature>
<feature type="modified residue" description="N6-(retinylidene)lysine" evidence="1">
    <location>
        <position position="312"/>
    </location>
</feature>
<feature type="glycosylation site" description="O-linked (GlcNAc) serine" evidence="2">
    <location>
        <position position="22"/>
    </location>
</feature>
<feature type="glycosylation site" description="N-linked (GlcNAc...) asparagine" evidence="3">
    <location>
        <position position="34"/>
    </location>
</feature>
<feature type="disulfide bond" evidence="4">
    <location>
        <begin position="126"/>
        <end position="203"/>
    </location>
</feature>
<comment type="function">
    <text>Visual pigments are the light-absorbing molecules that mediate vision. They consist of an apoprotein, opsin, covalently linked to cis-retinal.</text>
</comment>
<comment type="biophysicochemical properties">
    <absorption>
        <max evidence="5">553 nm</max>
    </absorption>
</comment>
<comment type="subcellular location">
    <subcellularLocation>
        <location>Membrane</location>
        <topology>Multi-pass membrane protein</topology>
    </subcellularLocation>
</comment>
<comment type="tissue specificity">
    <text evidence="5">The three color pigments are found in the cone photoreceptor cells. Expressed in retina (PubMed:10511567).</text>
</comment>
<comment type="PTM">
    <text>Phosphorylated on some or all of the serine and threonine residues present in the C-terminal region.</text>
</comment>
<comment type="similarity">
    <text evidence="4">Belongs to the G-protein coupled receptor 1 family. Opsin subfamily.</text>
</comment>
<organism>
    <name type="scientific">Felis catus</name>
    <name type="common">Cat</name>
    <name type="synonym">Felis silvestris catus</name>
    <dbReference type="NCBI Taxonomy" id="9685"/>
    <lineage>
        <taxon>Eukaryota</taxon>
        <taxon>Metazoa</taxon>
        <taxon>Chordata</taxon>
        <taxon>Craniata</taxon>
        <taxon>Vertebrata</taxon>
        <taxon>Euteleostomi</taxon>
        <taxon>Mammalia</taxon>
        <taxon>Eutheria</taxon>
        <taxon>Laurasiatheria</taxon>
        <taxon>Carnivora</taxon>
        <taxon>Feliformia</taxon>
        <taxon>Felidae</taxon>
        <taxon>Felinae</taxon>
        <taxon>Felis</taxon>
    </lineage>
</organism>
<sequence length="364" mass="40412">MTQRWGPQRLAGGQPHAGLEDSTRASIFTYTNSNATRGPFEGPNYHIAPRWVYHVTSAWMIFVVIASVFTNGLVLAATMKFKKLRHPLNWILVNLAVADLAETIIASTISVVNQIYGYFVLGHPMCVLEGYTVSLCGITGLWSLAIISWERWLVVCKPFGNVRFDAKLAIAGIAFSWIWAAVWTAPPIFGWSRYWPHGLKTSCGPDVFSGSSYPGVQSYMIVLMITCCIIPLSVIVLCYLQVWLAIRAVAKQQKESESTQKAEKEVTRMVMVMIFAYCVCWGPYTFFACFAAAHPGYAFHPLVAALPAYFAKSATIYNPIIYVFMNRQFRNCIMQLFGKKVDDGSELSSASRTEASSVSSVSPA</sequence>